<name>ADK_DICDI</name>
<organism>
    <name type="scientific">Dictyostelium discoideum</name>
    <name type="common">Social amoeba</name>
    <dbReference type="NCBI Taxonomy" id="44689"/>
    <lineage>
        <taxon>Eukaryota</taxon>
        <taxon>Amoebozoa</taxon>
        <taxon>Evosea</taxon>
        <taxon>Eumycetozoa</taxon>
        <taxon>Dictyostelia</taxon>
        <taxon>Dictyosteliales</taxon>
        <taxon>Dictyosteliaceae</taxon>
        <taxon>Dictyostelium</taxon>
    </lineage>
</organism>
<evidence type="ECO:0000250" key="1"/>
<evidence type="ECO:0000305" key="2"/>
<protein>
    <recommendedName>
        <fullName>Adenosine kinase</fullName>
        <shortName>AK</shortName>
        <ecNumber>2.7.1.20</ecNumber>
    </recommendedName>
    <alternativeName>
        <fullName>Adenosine 5'-phosphotransferase</fullName>
    </alternativeName>
</protein>
<feature type="chain" id="PRO_0000330873" description="Adenosine kinase">
    <location>
        <begin position="1"/>
        <end position="340"/>
    </location>
</feature>
<feature type="active site" evidence="1">
    <location>
        <position position="293"/>
    </location>
</feature>
<gene>
    <name type="primary">adk</name>
    <name type="ORF">DDB_G0286057</name>
</gene>
<proteinExistence type="inferred from homology"/>
<comment type="function">
    <text evidence="1">ATP dependent phosphorylation of adenosine and other related nucleoside analogs to monophosphate derivatives.</text>
</comment>
<comment type="catalytic activity">
    <reaction>
        <text>adenosine + ATP = AMP + ADP + H(+)</text>
        <dbReference type="Rhea" id="RHEA:20824"/>
        <dbReference type="ChEBI" id="CHEBI:15378"/>
        <dbReference type="ChEBI" id="CHEBI:16335"/>
        <dbReference type="ChEBI" id="CHEBI:30616"/>
        <dbReference type="ChEBI" id="CHEBI:456215"/>
        <dbReference type="ChEBI" id="CHEBI:456216"/>
        <dbReference type="EC" id="2.7.1.20"/>
    </reaction>
</comment>
<comment type="cofactor">
    <cofactor evidence="1">
        <name>Mg(2+)</name>
        <dbReference type="ChEBI" id="CHEBI:18420"/>
    </cofactor>
</comment>
<comment type="pathway">
    <text>Purine metabolism; AMP biosynthesis via salvage pathway; AMP from adenosine: step 1/1.</text>
</comment>
<comment type="subunit">
    <text evidence="1">Monomer.</text>
</comment>
<comment type="similarity">
    <text evidence="2">Belongs to the carbohydrate kinase PfkB family.</text>
</comment>
<dbReference type="EC" id="2.7.1.20"/>
<dbReference type="EMBL" id="AAFI02000085">
    <property type="protein sequence ID" value="EAL64407.2"/>
    <property type="molecule type" value="Genomic_DNA"/>
</dbReference>
<dbReference type="RefSeq" id="XP_637919.2">
    <property type="nucleotide sequence ID" value="XM_632827.2"/>
</dbReference>
<dbReference type="SMR" id="Q54MB5"/>
<dbReference type="FunCoup" id="Q54MB5">
    <property type="interactions" value="817"/>
</dbReference>
<dbReference type="STRING" id="44689.Q54MB5"/>
<dbReference type="PaxDb" id="44689-DDB0230174"/>
<dbReference type="EnsemblProtists" id="EAL64407">
    <property type="protein sequence ID" value="EAL64407"/>
    <property type="gene ID" value="DDB_G0286057"/>
</dbReference>
<dbReference type="GeneID" id="8625430"/>
<dbReference type="KEGG" id="ddi:DDB_G0286057"/>
<dbReference type="dictyBase" id="DDB_G0286057">
    <property type="gene designation" value="adk"/>
</dbReference>
<dbReference type="VEuPathDB" id="AmoebaDB:DDB_G0286057"/>
<dbReference type="eggNOG" id="KOG2854">
    <property type="taxonomic scope" value="Eukaryota"/>
</dbReference>
<dbReference type="HOGENOM" id="CLU_045832_0_0_1"/>
<dbReference type="InParanoid" id="Q54MB5"/>
<dbReference type="OMA" id="RTMCTYL"/>
<dbReference type="PhylomeDB" id="Q54MB5"/>
<dbReference type="Reactome" id="R-DDI-74217">
    <property type="pathway name" value="Purine salvage"/>
</dbReference>
<dbReference type="Reactome" id="R-DDI-9755088">
    <property type="pathway name" value="Ribavirin ADME"/>
</dbReference>
<dbReference type="UniPathway" id="UPA00588">
    <property type="reaction ID" value="UER00659"/>
</dbReference>
<dbReference type="PRO" id="PR:Q54MB5"/>
<dbReference type="Proteomes" id="UP000002195">
    <property type="component" value="Chromosome 4"/>
</dbReference>
<dbReference type="GO" id="GO:0005829">
    <property type="term" value="C:cytosol"/>
    <property type="evidence" value="ECO:0000318"/>
    <property type="project" value="GO_Central"/>
</dbReference>
<dbReference type="GO" id="GO:0005634">
    <property type="term" value="C:nucleus"/>
    <property type="evidence" value="ECO:0000318"/>
    <property type="project" value="GO_Central"/>
</dbReference>
<dbReference type="GO" id="GO:0045335">
    <property type="term" value="C:phagocytic vesicle"/>
    <property type="evidence" value="ECO:0007005"/>
    <property type="project" value="dictyBase"/>
</dbReference>
<dbReference type="GO" id="GO:0004001">
    <property type="term" value="F:adenosine kinase activity"/>
    <property type="evidence" value="ECO:0000250"/>
    <property type="project" value="dictyBase"/>
</dbReference>
<dbReference type="GO" id="GO:0005524">
    <property type="term" value="F:ATP binding"/>
    <property type="evidence" value="ECO:0007669"/>
    <property type="project" value="UniProtKB-KW"/>
</dbReference>
<dbReference type="GO" id="GO:0046872">
    <property type="term" value="F:metal ion binding"/>
    <property type="evidence" value="ECO:0007669"/>
    <property type="project" value="UniProtKB-KW"/>
</dbReference>
<dbReference type="GO" id="GO:0044209">
    <property type="term" value="P:AMP salvage"/>
    <property type="evidence" value="ECO:0007669"/>
    <property type="project" value="UniProtKB-UniPathway"/>
</dbReference>
<dbReference type="GO" id="GO:0006144">
    <property type="term" value="P:purine nucleobase metabolic process"/>
    <property type="evidence" value="ECO:0000250"/>
    <property type="project" value="dictyBase"/>
</dbReference>
<dbReference type="GO" id="GO:0006166">
    <property type="term" value="P:purine ribonucleoside salvage"/>
    <property type="evidence" value="ECO:0007669"/>
    <property type="project" value="UniProtKB-KW"/>
</dbReference>
<dbReference type="CDD" id="cd01168">
    <property type="entry name" value="adenosine_kinase"/>
    <property type="match status" value="1"/>
</dbReference>
<dbReference type="FunFam" id="3.40.1190.20:FF:000076">
    <property type="entry name" value="Adenosine kinase"/>
    <property type="match status" value="1"/>
</dbReference>
<dbReference type="Gene3D" id="3.30.1110.10">
    <property type="match status" value="1"/>
</dbReference>
<dbReference type="Gene3D" id="3.40.1190.20">
    <property type="match status" value="1"/>
</dbReference>
<dbReference type="InterPro" id="IPR001805">
    <property type="entry name" value="Adenokinase"/>
</dbReference>
<dbReference type="InterPro" id="IPR011611">
    <property type="entry name" value="PfkB_dom"/>
</dbReference>
<dbReference type="InterPro" id="IPR029056">
    <property type="entry name" value="Ribokinase-like"/>
</dbReference>
<dbReference type="PANTHER" id="PTHR45769">
    <property type="entry name" value="ADENOSINE KINASE"/>
    <property type="match status" value="1"/>
</dbReference>
<dbReference type="PANTHER" id="PTHR45769:SF3">
    <property type="entry name" value="ADENOSINE KINASE"/>
    <property type="match status" value="1"/>
</dbReference>
<dbReference type="Pfam" id="PF00294">
    <property type="entry name" value="PfkB"/>
    <property type="match status" value="1"/>
</dbReference>
<dbReference type="PRINTS" id="PR00989">
    <property type="entry name" value="ADENOKINASE"/>
</dbReference>
<dbReference type="SUPFAM" id="SSF53613">
    <property type="entry name" value="Ribokinase-like"/>
    <property type="match status" value="1"/>
</dbReference>
<sequence length="340" mass="37095">MSNIKILCAGNPLLDLSTHVEMAILDKYELKLGNAILAEDKHLPLYGEIKSGKVEYIPGGAAQNTSRVCQWMLKDKQTVCYTGCVGTDENATILKTATESNGVVTKYQVDSSAPTGACAVLINHKERSMVTNLGAANNFKIAHFQTEEMKAIVNSAQFFYLVGYFLTVSPDSAVHLGKHAAENDKPFLYGLAAPFLIDFFFDKVSELLPYVDIVFANESEAATLGRKMNWGEDLTVIAEKLAAWEKVNTKRTRTVVFTQGPDATLVFQNGVLTKYNPIKVATEDILDLNAAGDSFCGGFLAAYSNGQEIAKCVEAGHYASWEIIRQNGATVPASEPKIQF</sequence>
<accession>Q54MB5</accession>
<reference key="1">
    <citation type="journal article" date="2005" name="Nature">
        <title>The genome of the social amoeba Dictyostelium discoideum.</title>
        <authorList>
            <person name="Eichinger L."/>
            <person name="Pachebat J.A."/>
            <person name="Gloeckner G."/>
            <person name="Rajandream M.A."/>
            <person name="Sucgang R."/>
            <person name="Berriman M."/>
            <person name="Song J."/>
            <person name="Olsen R."/>
            <person name="Szafranski K."/>
            <person name="Xu Q."/>
            <person name="Tunggal B."/>
            <person name="Kummerfeld S."/>
            <person name="Madera M."/>
            <person name="Konfortov B.A."/>
            <person name="Rivero F."/>
            <person name="Bankier A.T."/>
            <person name="Lehmann R."/>
            <person name="Hamlin N."/>
            <person name="Davies R."/>
            <person name="Gaudet P."/>
            <person name="Fey P."/>
            <person name="Pilcher K."/>
            <person name="Chen G."/>
            <person name="Saunders D."/>
            <person name="Sodergren E.J."/>
            <person name="Davis P."/>
            <person name="Kerhornou A."/>
            <person name="Nie X."/>
            <person name="Hall N."/>
            <person name="Anjard C."/>
            <person name="Hemphill L."/>
            <person name="Bason N."/>
            <person name="Farbrother P."/>
            <person name="Desany B."/>
            <person name="Just E."/>
            <person name="Morio T."/>
            <person name="Rost R."/>
            <person name="Churcher C.M."/>
            <person name="Cooper J."/>
            <person name="Haydock S."/>
            <person name="van Driessche N."/>
            <person name="Cronin A."/>
            <person name="Goodhead I."/>
            <person name="Muzny D.M."/>
            <person name="Mourier T."/>
            <person name="Pain A."/>
            <person name="Lu M."/>
            <person name="Harper D."/>
            <person name="Lindsay R."/>
            <person name="Hauser H."/>
            <person name="James K.D."/>
            <person name="Quiles M."/>
            <person name="Madan Babu M."/>
            <person name="Saito T."/>
            <person name="Buchrieser C."/>
            <person name="Wardroper A."/>
            <person name="Felder M."/>
            <person name="Thangavelu M."/>
            <person name="Johnson D."/>
            <person name="Knights A."/>
            <person name="Loulseged H."/>
            <person name="Mungall K.L."/>
            <person name="Oliver K."/>
            <person name="Price C."/>
            <person name="Quail M.A."/>
            <person name="Urushihara H."/>
            <person name="Hernandez J."/>
            <person name="Rabbinowitsch E."/>
            <person name="Steffen D."/>
            <person name="Sanders M."/>
            <person name="Ma J."/>
            <person name="Kohara Y."/>
            <person name="Sharp S."/>
            <person name="Simmonds M.N."/>
            <person name="Spiegler S."/>
            <person name="Tivey A."/>
            <person name="Sugano S."/>
            <person name="White B."/>
            <person name="Walker D."/>
            <person name="Woodward J.R."/>
            <person name="Winckler T."/>
            <person name="Tanaka Y."/>
            <person name="Shaulsky G."/>
            <person name="Schleicher M."/>
            <person name="Weinstock G.M."/>
            <person name="Rosenthal A."/>
            <person name="Cox E.C."/>
            <person name="Chisholm R.L."/>
            <person name="Gibbs R.A."/>
            <person name="Loomis W.F."/>
            <person name="Platzer M."/>
            <person name="Kay R.R."/>
            <person name="Williams J.G."/>
            <person name="Dear P.H."/>
            <person name="Noegel A.A."/>
            <person name="Barrell B.G."/>
            <person name="Kuspa A."/>
        </authorList>
    </citation>
    <scope>NUCLEOTIDE SEQUENCE [LARGE SCALE GENOMIC DNA]</scope>
    <source>
        <strain>AX4</strain>
    </source>
</reference>
<keyword id="KW-0067">ATP-binding</keyword>
<keyword id="KW-0418">Kinase</keyword>
<keyword id="KW-0460">Magnesium</keyword>
<keyword id="KW-0479">Metal-binding</keyword>
<keyword id="KW-0547">Nucleotide-binding</keyword>
<keyword id="KW-0660">Purine salvage</keyword>
<keyword id="KW-1185">Reference proteome</keyword>
<keyword id="KW-0808">Transferase</keyword>